<gene>
    <name evidence="1" type="primary">rlmN</name>
    <name type="ordered locus">CBO2506</name>
    <name type="ordered locus">CLC_2361</name>
</gene>
<accession>A5I4T4</accession>
<accession>A7G5Y9</accession>
<sequence>MENILDFTLEELKEWLISKEEKAFRAKQVFDWIYNKLIFDFNNMKNIPYKTKNLLSDNFYVGVPKVVKKLMSQDKNTYKFLFEYKDGNIIESVVMKYKHGNSICVSTQVGCRMGCKFCASTLDGVIRNLTSGEILSQIMAAQKEIGERISNVVLMGSGEPLDNFENVTKFLDLVTSDTTLNIGQRHITLSTCGIVPKIKELADKNYNITLAISLHSPEDLLRKEMMPIANKYSIKELMEACDYYINKTNRRITFEYALVKGKNDSIKEAKKLSTVLKGKLCHVNLIPVNEIKENSYEKSTLKNIESFGNILKENGIETTIRREMGADINAACGQLRRSYVSK</sequence>
<proteinExistence type="inferred from homology"/>
<comment type="function">
    <text evidence="1">Specifically methylates position 2 of adenine 2503 in 23S rRNA and position 2 of adenine 37 in tRNAs.</text>
</comment>
<comment type="catalytic activity">
    <reaction evidence="1">
        <text>adenosine(2503) in 23S rRNA + 2 reduced [2Fe-2S]-[ferredoxin] + 2 S-adenosyl-L-methionine = 2-methyladenosine(2503) in 23S rRNA + 5'-deoxyadenosine + L-methionine + 2 oxidized [2Fe-2S]-[ferredoxin] + S-adenosyl-L-homocysteine</text>
        <dbReference type="Rhea" id="RHEA:42916"/>
        <dbReference type="Rhea" id="RHEA-COMP:10000"/>
        <dbReference type="Rhea" id="RHEA-COMP:10001"/>
        <dbReference type="Rhea" id="RHEA-COMP:10152"/>
        <dbReference type="Rhea" id="RHEA-COMP:10282"/>
        <dbReference type="ChEBI" id="CHEBI:17319"/>
        <dbReference type="ChEBI" id="CHEBI:33737"/>
        <dbReference type="ChEBI" id="CHEBI:33738"/>
        <dbReference type="ChEBI" id="CHEBI:57844"/>
        <dbReference type="ChEBI" id="CHEBI:57856"/>
        <dbReference type="ChEBI" id="CHEBI:59789"/>
        <dbReference type="ChEBI" id="CHEBI:74411"/>
        <dbReference type="ChEBI" id="CHEBI:74497"/>
        <dbReference type="EC" id="2.1.1.192"/>
    </reaction>
</comment>
<comment type="catalytic activity">
    <reaction evidence="1">
        <text>adenosine(37) in tRNA + 2 reduced [2Fe-2S]-[ferredoxin] + 2 S-adenosyl-L-methionine = 2-methyladenosine(37) in tRNA + 5'-deoxyadenosine + L-methionine + 2 oxidized [2Fe-2S]-[ferredoxin] + S-adenosyl-L-homocysteine</text>
        <dbReference type="Rhea" id="RHEA:43332"/>
        <dbReference type="Rhea" id="RHEA-COMP:10000"/>
        <dbReference type="Rhea" id="RHEA-COMP:10001"/>
        <dbReference type="Rhea" id="RHEA-COMP:10162"/>
        <dbReference type="Rhea" id="RHEA-COMP:10485"/>
        <dbReference type="ChEBI" id="CHEBI:17319"/>
        <dbReference type="ChEBI" id="CHEBI:33737"/>
        <dbReference type="ChEBI" id="CHEBI:33738"/>
        <dbReference type="ChEBI" id="CHEBI:57844"/>
        <dbReference type="ChEBI" id="CHEBI:57856"/>
        <dbReference type="ChEBI" id="CHEBI:59789"/>
        <dbReference type="ChEBI" id="CHEBI:74411"/>
        <dbReference type="ChEBI" id="CHEBI:74497"/>
        <dbReference type="EC" id="2.1.1.192"/>
    </reaction>
</comment>
<comment type="cofactor">
    <cofactor evidence="1">
        <name>[4Fe-4S] cluster</name>
        <dbReference type="ChEBI" id="CHEBI:49883"/>
    </cofactor>
    <text evidence="1">Binds 1 [4Fe-4S] cluster. The cluster is coordinated with 3 cysteines and an exchangeable S-adenosyl-L-methionine.</text>
</comment>
<comment type="subcellular location">
    <subcellularLocation>
        <location evidence="1">Cytoplasm</location>
    </subcellularLocation>
</comment>
<comment type="miscellaneous">
    <text evidence="1">Reaction proceeds by a ping-pong mechanism involving intermediate methylation of a conserved cysteine residue.</text>
</comment>
<comment type="similarity">
    <text evidence="1">Belongs to the radical SAM superfamily. RlmN family.</text>
</comment>
<feature type="chain" id="PRO_0000350116" description="Probable dual-specificity RNA methyltransferase RlmN">
    <location>
        <begin position="1"/>
        <end position="342"/>
    </location>
</feature>
<feature type="domain" description="Radical SAM core" evidence="2">
    <location>
        <begin position="97"/>
        <end position="327"/>
    </location>
</feature>
<feature type="active site" description="Proton acceptor" evidence="1">
    <location>
        <position position="91"/>
    </location>
</feature>
<feature type="active site" description="S-methylcysteine intermediate" evidence="1">
    <location>
        <position position="332"/>
    </location>
</feature>
<feature type="binding site" evidence="1">
    <location>
        <position position="111"/>
    </location>
    <ligand>
        <name>[4Fe-4S] cluster</name>
        <dbReference type="ChEBI" id="CHEBI:49883"/>
        <note>4Fe-4S-S-AdoMet</note>
    </ligand>
</feature>
<feature type="binding site" evidence="1">
    <location>
        <position position="115"/>
    </location>
    <ligand>
        <name>[4Fe-4S] cluster</name>
        <dbReference type="ChEBI" id="CHEBI:49883"/>
        <note>4Fe-4S-S-AdoMet</note>
    </ligand>
</feature>
<feature type="binding site" evidence="1">
    <location>
        <position position="118"/>
    </location>
    <ligand>
        <name>[4Fe-4S] cluster</name>
        <dbReference type="ChEBI" id="CHEBI:49883"/>
        <note>4Fe-4S-S-AdoMet</note>
    </ligand>
</feature>
<feature type="binding site" evidence="1">
    <location>
        <begin position="158"/>
        <end position="159"/>
    </location>
    <ligand>
        <name>S-adenosyl-L-methionine</name>
        <dbReference type="ChEBI" id="CHEBI:59789"/>
    </ligand>
</feature>
<feature type="binding site" evidence="1">
    <location>
        <position position="190"/>
    </location>
    <ligand>
        <name>S-adenosyl-L-methionine</name>
        <dbReference type="ChEBI" id="CHEBI:59789"/>
    </ligand>
</feature>
<feature type="binding site" evidence="1">
    <location>
        <begin position="213"/>
        <end position="215"/>
    </location>
    <ligand>
        <name>S-adenosyl-L-methionine</name>
        <dbReference type="ChEBI" id="CHEBI:59789"/>
    </ligand>
</feature>
<feature type="binding site" evidence="1">
    <location>
        <position position="289"/>
    </location>
    <ligand>
        <name>S-adenosyl-L-methionine</name>
        <dbReference type="ChEBI" id="CHEBI:59789"/>
    </ligand>
</feature>
<feature type="disulfide bond" description="(transient)" evidence="1">
    <location>
        <begin position="104"/>
        <end position="332"/>
    </location>
</feature>
<reference key="1">
    <citation type="journal article" date="2007" name="Genome Res.">
        <title>Genome sequence of a proteolytic (Group I) Clostridium botulinum strain Hall A and comparative analysis of the clostridial genomes.</title>
        <authorList>
            <person name="Sebaihia M."/>
            <person name="Peck M.W."/>
            <person name="Minton N.P."/>
            <person name="Thomson N.R."/>
            <person name="Holden M.T.G."/>
            <person name="Mitchell W.J."/>
            <person name="Carter A.T."/>
            <person name="Bentley S.D."/>
            <person name="Mason D.R."/>
            <person name="Crossman L."/>
            <person name="Paul C.J."/>
            <person name="Ivens A."/>
            <person name="Wells-Bennik M.H.J."/>
            <person name="Davis I.J."/>
            <person name="Cerdeno-Tarraga A.M."/>
            <person name="Churcher C."/>
            <person name="Quail M.A."/>
            <person name="Chillingworth T."/>
            <person name="Feltwell T."/>
            <person name="Fraser A."/>
            <person name="Goodhead I."/>
            <person name="Hance Z."/>
            <person name="Jagels K."/>
            <person name="Larke N."/>
            <person name="Maddison M."/>
            <person name="Moule S."/>
            <person name="Mungall K."/>
            <person name="Norbertczak H."/>
            <person name="Rabbinowitsch E."/>
            <person name="Sanders M."/>
            <person name="Simmonds M."/>
            <person name="White B."/>
            <person name="Whithead S."/>
            <person name="Parkhill J."/>
        </authorList>
    </citation>
    <scope>NUCLEOTIDE SEQUENCE [LARGE SCALE GENOMIC DNA]</scope>
    <source>
        <strain>Hall / ATCC 3502 / NCTC 13319 / Type A</strain>
    </source>
</reference>
<reference key="2">
    <citation type="journal article" date="2007" name="PLoS ONE">
        <title>Analysis of the neurotoxin complex genes in Clostridium botulinum A1-A4 and B1 strains: BoNT/A3, /Ba4 and /B1 clusters are located within plasmids.</title>
        <authorList>
            <person name="Smith T.J."/>
            <person name="Hill K.K."/>
            <person name="Foley B.T."/>
            <person name="Detter J.C."/>
            <person name="Munk A.C."/>
            <person name="Bruce D.C."/>
            <person name="Doggett N.A."/>
            <person name="Smith L.A."/>
            <person name="Marks J.D."/>
            <person name="Xie G."/>
            <person name="Brettin T.S."/>
        </authorList>
    </citation>
    <scope>NUCLEOTIDE SEQUENCE [LARGE SCALE GENOMIC DNA]</scope>
    <source>
        <strain>Hall / ATCC 3502 / NCTC 13319 / Type A</strain>
    </source>
</reference>
<keyword id="KW-0004">4Fe-4S</keyword>
<keyword id="KW-0963">Cytoplasm</keyword>
<keyword id="KW-1015">Disulfide bond</keyword>
<keyword id="KW-0408">Iron</keyword>
<keyword id="KW-0411">Iron-sulfur</keyword>
<keyword id="KW-0479">Metal-binding</keyword>
<keyword id="KW-0489">Methyltransferase</keyword>
<keyword id="KW-1185">Reference proteome</keyword>
<keyword id="KW-0698">rRNA processing</keyword>
<keyword id="KW-0949">S-adenosyl-L-methionine</keyword>
<keyword id="KW-0808">Transferase</keyword>
<keyword id="KW-0819">tRNA processing</keyword>
<organism>
    <name type="scientific">Clostridium botulinum (strain Hall / ATCC 3502 / NCTC 13319 / Type A)</name>
    <dbReference type="NCBI Taxonomy" id="441771"/>
    <lineage>
        <taxon>Bacteria</taxon>
        <taxon>Bacillati</taxon>
        <taxon>Bacillota</taxon>
        <taxon>Clostridia</taxon>
        <taxon>Eubacteriales</taxon>
        <taxon>Clostridiaceae</taxon>
        <taxon>Clostridium</taxon>
    </lineage>
</organism>
<dbReference type="EC" id="2.1.1.192" evidence="1"/>
<dbReference type="EMBL" id="CP000727">
    <property type="protein sequence ID" value="ABS38461.1"/>
    <property type="molecule type" value="Genomic_DNA"/>
</dbReference>
<dbReference type="EMBL" id="AM412317">
    <property type="protein sequence ID" value="CAL84057.1"/>
    <property type="molecule type" value="Genomic_DNA"/>
</dbReference>
<dbReference type="RefSeq" id="WP_011986842.1">
    <property type="nucleotide sequence ID" value="NC_009698.1"/>
</dbReference>
<dbReference type="RefSeq" id="YP_001255001.1">
    <property type="nucleotide sequence ID" value="NC_009495.1"/>
</dbReference>
<dbReference type="RefSeq" id="YP_001388204.1">
    <property type="nucleotide sequence ID" value="NC_009698.1"/>
</dbReference>
<dbReference type="SMR" id="A5I4T4"/>
<dbReference type="GeneID" id="5186761"/>
<dbReference type="KEGG" id="cbh:CLC_2361"/>
<dbReference type="KEGG" id="cbo:CBO2506"/>
<dbReference type="PATRIC" id="fig|413999.7.peg.2484"/>
<dbReference type="HOGENOM" id="CLU_029101_0_1_9"/>
<dbReference type="PRO" id="PR:A5I4T4"/>
<dbReference type="Proteomes" id="UP000001986">
    <property type="component" value="Chromosome"/>
</dbReference>
<dbReference type="GO" id="GO:0005737">
    <property type="term" value="C:cytoplasm"/>
    <property type="evidence" value="ECO:0007669"/>
    <property type="project" value="UniProtKB-SubCell"/>
</dbReference>
<dbReference type="GO" id="GO:0051539">
    <property type="term" value="F:4 iron, 4 sulfur cluster binding"/>
    <property type="evidence" value="ECO:0007669"/>
    <property type="project" value="UniProtKB-UniRule"/>
</dbReference>
<dbReference type="GO" id="GO:0046872">
    <property type="term" value="F:metal ion binding"/>
    <property type="evidence" value="ECO:0007669"/>
    <property type="project" value="UniProtKB-KW"/>
</dbReference>
<dbReference type="GO" id="GO:0070040">
    <property type="term" value="F:rRNA (adenine(2503)-C2-)-methyltransferase activity"/>
    <property type="evidence" value="ECO:0007669"/>
    <property type="project" value="UniProtKB-UniRule"/>
</dbReference>
<dbReference type="GO" id="GO:0019843">
    <property type="term" value="F:rRNA binding"/>
    <property type="evidence" value="ECO:0007669"/>
    <property type="project" value="UniProtKB-UniRule"/>
</dbReference>
<dbReference type="GO" id="GO:0002935">
    <property type="term" value="F:tRNA (adenine(37)-C2)-methyltransferase activity"/>
    <property type="evidence" value="ECO:0007669"/>
    <property type="project" value="UniProtKB-UniRule"/>
</dbReference>
<dbReference type="GO" id="GO:0000049">
    <property type="term" value="F:tRNA binding"/>
    <property type="evidence" value="ECO:0007669"/>
    <property type="project" value="UniProtKB-UniRule"/>
</dbReference>
<dbReference type="GO" id="GO:0070475">
    <property type="term" value="P:rRNA base methylation"/>
    <property type="evidence" value="ECO:0000318"/>
    <property type="project" value="GO_Central"/>
</dbReference>
<dbReference type="GO" id="GO:0030488">
    <property type="term" value="P:tRNA methylation"/>
    <property type="evidence" value="ECO:0000318"/>
    <property type="project" value="GO_Central"/>
</dbReference>
<dbReference type="CDD" id="cd01335">
    <property type="entry name" value="Radical_SAM"/>
    <property type="match status" value="1"/>
</dbReference>
<dbReference type="FunFam" id="3.20.20.70:FF:000014">
    <property type="entry name" value="Probable dual-specificity RNA methyltransferase RlmN"/>
    <property type="match status" value="1"/>
</dbReference>
<dbReference type="Gene3D" id="1.10.150.530">
    <property type="match status" value="1"/>
</dbReference>
<dbReference type="Gene3D" id="3.20.20.70">
    <property type="entry name" value="Aldolase class I"/>
    <property type="match status" value="1"/>
</dbReference>
<dbReference type="HAMAP" id="MF_01849">
    <property type="entry name" value="RNA_methyltr_RlmN"/>
    <property type="match status" value="1"/>
</dbReference>
<dbReference type="InterPro" id="IPR013785">
    <property type="entry name" value="Aldolase_TIM"/>
</dbReference>
<dbReference type="InterPro" id="IPR040072">
    <property type="entry name" value="Methyltransferase_A"/>
</dbReference>
<dbReference type="InterPro" id="IPR048641">
    <property type="entry name" value="RlmN_N"/>
</dbReference>
<dbReference type="InterPro" id="IPR027492">
    <property type="entry name" value="RNA_MTrfase_RlmN"/>
</dbReference>
<dbReference type="InterPro" id="IPR004383">
    <property type="entry name" value="rRNA_lsu_MTrfase_RlmN/Cfr"/>
</dbReference>
<dbReference type="InterPro" id="IPR007197">
    <property type="entry name" value="rSAM"/>
</dbReference>
<dbReference type="NCBIfam" id="TIGR00048">
    <property type="entry name" value="rRNA_mod_RlmN"/>
    <property type="match status" value="1"/>
</dbReference>
<dbReference type="PANTHER" id="PTHR30544">
    <property type="entry name" value="23S RRNA METHYLTRANSFERASE"/>
    <property type="match status" value="1"/>
</dbReference>
<dbReference type="PANTHER" id="PTHR30544:SF5">
    <property type="entry name" value="RADICAL SAM CORE DOMAIN-CONTAINING PROTEIN"/>
    <property type="match status" value="1"/>
</dbReference>
<dbReference type="Pfam" id="PF04055">
    <property type="entry name" value="Radical_SAM"/>
    <property type="match status" value="1"/>
</dbReference>
<dbReference type="Pfam" id="PF21016">
    <property type="entry name" value="RlmN_N"/>
    <property type="match status" value="1"/>
</dbReference>
<dbReference type="PIRSF" id="PIRSF006004">
    <property type="entry name" value="CHP00048"/>
    <property type="match status" value="1"/>
</dbReference>
<dbReference type="SFLD" id="SFLDF00275">
    <property type="entry name" value="adenosine_C2_methyltransferase"/>
    <property type="match status" value="1"/>
</dbReference>
<dbReference type="SFLD" id="SFLDG01062">
    <property type="entry name" value="methyltransferase_(Class_A)"/>
    <property type="match status" value="1"/>
</dbReference>
<dbReference type="SUPFAM" id="SSF102114">
    <property type="entry name" value="Radical SAM enzymes"/>
    <property type="match status" value="1"/>
</dbReference>
<dbReference type="PROSITE" id="PS51918">
    <property type="entry name" value="RADICAL_SAM"/>
    <property type="match status" value="1"/>
</dbReference>
<name>RLMN_CLOBH</name>
<evidence type="ECO:0000255" key="1">
    <source>
        <dbReference type="HAMAP-Rule" id="MF_01849"/>
    </source>
</evidence>
<evidence type="ECO:0000255" key="2">
    <source>
        <dbReference type="PROSITE-ProRule" id="PRU01266"/>
    </source>
</evidence>
<protein>
    <recommendedName>
        <fullName evidence="1">Probable dual-specificity RNA methyltransferase RlmN</fullName>
        <ecNumber evidence="1">2.1.1.192</ecNumber>
    </recommendedName>
    <alternativeName>
        <fullName evidence="1">23S rRNA (adenine(2503)-C(2))-methyltransferase</fullName>
    </alternativeName>
    <alternativeName>
        <fullName evidence="1">23S rRNA m2A2503 methyltransferase</fullName>
    </alternativeName>
    <alternativeName>
        <fullName evidence="1">Ribosomal RNA large subunit methyltransferase N</fullName>
    </alternativeName>
    <alternativeName>
        <fullName evidence="1">tRNA (adenine(37)-C(2))-methyltransferase</fullName>
    </alternativeName>
    <alternativeName>
        <fullName evidence="1">tRNA m2A37 methyltransferase</fullName>
    </alternativeName>
</protein>